<protein>
    <recommendedName>
        <fullName evidence="1">Glucose-6-phosphate isomerase</fullName>
        <shortName evidence="1">GPI</shortName>
        <ecNumber evidence="1">5.3.1.9</ecNumber>
    </recommendedName>
    <alternativeName>
        <fullName evidence="1">Phosphoglucose isomerase</fullName>
        <shortName evidence="1">PGI</shortName>
    </alternativeName>
    <alternativeName>
        <fullName evidence="1">Phosphohexose isomerase</fullName>
        <shortName evidence="1">PHI</shortName>
    </alternativeName>
</protein>
<accession>Q2KCY8</accession>
<feature type="chain" id="PRO_0000252635" description="Glucose-6-phosphate isomerase">
    <location>
        <begin position="1"/>
        <end position="541"/>
    </location>
</feature>
<feature type="active site" description="Proton donor" evidence="1">
    <location>
        <position position="346"/>
    </location>
</feature>
<feature type="active site" evidence="1">
    <location>
        <position position="377"/>
    </location>
</feature>
<feature type="active site" evidence="1">
    <location>
        <position position="506"/>
    </location>
</feature>
<proteinExistence type="inferred from homology"/>
<gene>
    <name evidence="1" type="primary">pgi</name>
    <name type="ordered locus">RHE_CH00477</name>
</gene>
<evidence type="ECO:0000255" key="1">
    <source>
        <dbReference type="HAMAP-Rule" id="MF_00473"/>
    </source>
</evidence>
<organism>
    <name type="scientific">Rhizobium etli (strain ATCC 51251 / DSM 11541 / JCM 21823 / NBRC 15573 / CFN 42)</name>
    <dbReference type="NCBI Taxonomy" id="347834"/>
    <lineage>
        <taxon>Bacteria</taxon>
        <taxon>Pseudomonadati</taxon>
        <taxon>Pseudomonadota</taxon>
        <taxon>Alphaproteobacteria</taxon>
        <taxon>Hyphomicrobiales</taxon>
        <taxon>Rhizobiaceae</taxon>
        <taxon>Rhizobium/Agrobacterium group</taxon>
        <taxon>Rhizobium</taxon>
    </lineage>
</organism>
<sequence>MNAIVEQLKSTAAATKATDLRAAFAADAQRFSRFSVSLDDLLMDYSKTAVNDEILKLLVKLAEEGGVERKREEMFSGKAINFTEDRAVLHTALRNRSNTPVLVDGKDVMPDVNAVLAAMGKFADDIRSGALKGATGKAITDVINIGIGGSDLGPVMATLALAPFHDGPRAHFVSNIDGAHIADILKLVQPETTLFIVASKTFTTVETMTNAQTARSFIAKSLGEAAVQHHFAAVSTALDKVAAFGIDSARVFGFWDWVGGRYSIWSAIGLPLMIAIGPENFGKFLDGAHAVDNHFRQAPVTENLPMLLGLIGFYHRNVLGYPTRAILPYDQRLSRFPAYLQQLDMESNGKGVTIDGTPVDGNSGPVVWGEPGTNGQHAFYQLIHQGTSIIPAEFMIAANAFEPELRHQHQLLISNVLAQSEALMKGRTFAEAKKQLTDKGMDDKKADFIAPHRVFTGNRPSITFVYDKLTPYALGRLIALYEHRVFVEGVLFRINSFDQWGVELGKELATGLLPVVEGKESAASHDSSTQGLVAALAKLAK</sequence>
<keyword id="KW-0963">Cytoplasm</keyword>
<keyword id="KW-0312">Gluconeogenesis</keyword>
<keyword id="KW-0324">Glycolysis</keyword>
<keyword id="KW-0413">Isomerase</keyword>
<keyword id="KW-1185">Reference proteome</keyword>
<comment type="function">
    <text evidence="1">Catalyzes the reversible isomerization of glucose-6-phosphate to fructose-6-phosphate.</text>
</comment>
<comment type="catalytic activity">
    <reaction evidence="1">
        <text>alpha-D-glucose 6-phosphate = beta-D-fructose 6-phosphate</text>
        <dbReference type="Rhea" id="RHEA:11816"/>
        <dbReference type="ChEBI" id="CHEBI:57634"/>
        <dbReference type="ChEBI" id="CHEBI:58225"/>
        <dbReference type="EC" id="5.3.1.9"/>
    </reaction>
</comment>
<comment type="pathway">
    <text evidence="1">Carbohydrate biosynthesis; gluconeogenesis.</text>
</comment>
<comment type="pathway">
    <text evidence="1">Carbohydrate degradation; glycolysis; D-glyceraldehyde 3-phosphate and glycerone phosphate from D-glucose: step 2/4.</text>
</comment>
<comment type="subcellular location">
    <subcellularLocation>
        <location evidence="1">Cytoplasm</location>
    </subcellularLocation>
</comment>
<comment type="similarity">
    <text evidence="1">Belongs to the GPI family.</text>
</comment>
<dbReference type="EC" id="5.3.1.9" evidence="1"/>
<dbReference type="EMBL" id="CP000133">
    <property type="protein sequence ID" value="ABC89298.1"/>
    <property type="molecule type" value="Genomic_DNA"/>
</dbReference>
<dbReference type="RefSeq" id="WP_011423855.1">
    <property type="nucleotide sequence ID" value="NC_007761.1"/>
</dbReference>
<dbReference type="SMR" id="Q2KCY8"/>
<dbReference type="KEGG" id="ret:RHE_CH00477"/>
<dbReference type="eggNOG" id="COG0166">
    <property type="taxonomic scope" value="Bacteria"/>
</dbReference>
<dbReference type="HOGENOM" id="CLU_017947_3_1_5"/>
<dbReference type="OrthoDB" id="140919at2"/>
<dbReference type="UniPathway" id="UPA00109">
    <property type="reaction ID" value="UER00181"/>
</dbReference>
<dbReference type="UniPathway" id="UPA00138"/>
<dbReference type="Proteomes" id="UP000001936">
    <property type="component" value="Chromosome"/>
</dbReference>
<dbReference type="GO" id="GO:0005829">
    <property type="term" value="C:cytosol"/>
    <property type="evidence" value="ECO:0007669"/>
    <property type="project" value="TreeGrafter"/>
</dbReference>
<dbReference type="GO" id="GO:0097367">
    <property type="term" value="F:carbohydrate derivative binding"/>
    <property type="evidence" value="ECO:0007669"/>
    <property type="project" value="InterPro"/>
</dbReference>
<dbReference type="GO" id="GO:0004347">
    <property type="term" value="F:glucose-6-phosphate isomerase activity"/>
    <property type="evidence" value="ECO:0007669"/>
    <property type="project" value="UniProtKB-UniRule"/>
</dbReference>
<dbReference type="GO" id="GO:0048029">
    <property type="term" value="F:monosaccharide binding"/>
    <property type="evidence" value="ECO:0007669"/>
    <property type="project" value="TreeGrafter"/>
</dbReference>
<dbReference type="GO" id="GO:0006094">
    <property type="term" value="P:gluconeogenesis"/>
    <property type="evidence" value="ECO:0007669"/>
    <property type="project" value="UniProtKB-UniRule"/>
</dbReference>
<dbReference type="GO" id="GO:0051156">
    <property type="term" value="P:glucose 6-phosphate metabolic process"/>
    <property type="evidence" value="ECO:0007669"/>
    <property type="project" value="TreeGrafter"/>
</dbReference>
<dbReference type="GO" id="GO:0006096">
    <property type="term" value="P:glycolytic process"/>
    <property type="evidence" value="ECO:0007669"/>
    <property type="project" value="UniProtKB-UniRule"/>
</dbReference>
<dbReference type="CDD" id="cd05015">
    <property type="entry name" value="SIS_PGI_1"/>
    <property type="match status" value="1"/>
</dbReference>
<dbReference type="CDD" id="cd05016">
    <property type="entry name" value="SIS_PGI_2"/>
    <property type="match status" value="1"/>
</dbReference>
<dbReference type="FunFam" id="3.40.50.10490:FF:000018">
    <property type="entry name" value="Glucose-6-phosphate isomerase"/>
    <property type="match status" value="1"/>
</dbReference>
<dbReference type="Gene3D" id="1.10.1390.10">
    <property type="match status" value="1"/>
</dbReference>
<dbReference type="Gene3D" id="3.40.50.10490">
    <property type="entry name" value="Glucose-6-phosphate isomerase like protein, domain 1"/>
    <property type="match status" value="2"/>
</dbReference>
<dbReference type="HAMAP" id="MF_00473">
    <property type="entry name" value="G6P_isomerase"/>
    <property type="match status" value="1"/>
</dbReference>
<dbReference type="InterPro" id="IPR001672">
    <property type="entry name" value="G6P_Isomerase"/>
</dbReference>
<dbReference type="InterPro" id="IPR023096">
    <property type="entry name" value="G6P_Isomerase_C"/>
</dbReference>
<dbReference type="InterPro" id="IPR018189">
    <property type="entry name" value="Phosphoglucose_isomerase_CS"/>
</dbReference>
<dbReference type="InterPro" id="IPR046348">
    <property type="entry name" value="SIS_dom_sf"/>
</dbReference>
<dbReference type="InterPro" id="IPR035476">
    <property type="entry name" value="SIS_PGI_1"/>
</dbReference>
<dbReference type="InterPro" id="IPR035482">
    <property type="entry name" value="SIS_PGI_2"/>
</dbReference>
<dbReference type="NCBIfam" id="NF001211">
    <property type="entry name" value="PRK00179.1"/>
    <property type="match status" value="1"/>
</dbReference>
<dbReference type="PANTHER" id="PTHR11469">
    <property type="entry name" value="GLUCOSE-6-PHOSPHATE ISOMERASE"/>
    <property type="match status" value="1"/>
</dbReference>
<dbReference type="PANTHER" id="PTHR11469:SF1">
    <property type="entry name" value="GLUCOSE-6-PHOSPHATE ISOMERASE"/>
    <property type="match status" value="1"/>
</dbReference>
<dbReference type="Pfam" id="PF00342">
    <property type="entry name" value="PGI"/>
    <property type="match status" value="1"/>
</dbReference>
<dbReference type="PRINTS" id="PR00662">
    <property type="entry name" value="G6PISOMERASE"/>
</dbReference>
<dbReference type="SUPFAM" id="SSF53697">
    <property type="entry name" value="SIS domain"/>
    <property type="match status" value="1"/>
</dbReference>
<dbReference type="PROSITE" id="PS00765">
    <property type="entry name" value="P_GLUCOSE_ISOMERASE_1"/>
    <property type="match status" value="1"/>
</dbReference>
<dbReference type="PROSITE" id="PS00174">
    <property type="entry name" value="P_GLUCOSE_ISOMERASE_2"/>
    <property type="match status" value="1"/>
</dbReference>
<dbReference type="PROSITE" id="PS51463">
    <property type="entry name" value="P_GLUCOSE_ISOMERASE_3"/>
    <property type="match status" value="1"/>
</dbReference>
<name>G6PI_RHIEC</name>
<reference key="1">
    <citation type="journal article" date="2006" name="Proc. Natl. Acad. Sci. U.S.A.">
        <title>The partitioned Rhizobium etli genome: genetic and metabolic redundancy in seven interacting replicons.</title>
        <authorList>
            <person name="Gonzalez V."/>
            <person name="Santamaria R.I."/>
            <person name="Bustos P."/>
            <person name="Hernandez-Gonzalez I."/>
            <person name="Medrano-Soto A."/>
            <person name="Moreno-Hagelsieb G."/>
            <person name="Janga S.C."/>
            <person name="Ramirez M.A."/>
            <person name="Jimenez-Jacinto V."/>
            <person name="Collado-Vides J."/>
            <person name="Davila G."/>
        </authorList>
    </citation>
    <scope>NUCLEOTIDE SEQUENCE [LARGE SCALE GENOMIC DNA]</scope>
    <source>
        <strain>ATCC 51251 / DSM 11541 / JCM 21823 / NBRC 15573 / CFN 42</strain>
    </source>
</reference>